<evidence type="ECO:0000255" key="1"/>
<evidence type="ECO:0000305" key="2"/>
<dbReference type="EMBL" id="U00096">
    <property type="protein sequence ID" value="AAC74199.1"/>
    <property type="molecule type" value="Genomic_DNA"/>
</dbReference>
<dbReference type="EMBL" id="AP009048">
    <property type="protein sequence ID" value="BAA35930.1"/>
    <property type="molecule type" value="Genomic_DNA"/>
</dbReference>
<dbReference type="PIR" id="H64855">
    <property type="entry name" value="H64855"/>
</dbReference>
<dbReference type="RefSeq" id="NP_415633.1">
    <property type="nucleotide sequence ID" value="NC_000913.3"/>
</dbReference>
<dbReference type="RefSeq" id="WP_000810253.1">
    <property type="nucleotide sequence ID" value="NZ_LN832404.1"/>
</dbReference>
<dbReference type="BioGRID" id="4260087">
    <property type="interactions" value="117"/>
</dbReference>
<dbReference type="FunCoup" id="P75955">
    <property type="interactions" value="32"/>
</dbReference>
<dbReference type="STRING" id="511145.b1115"/>
<dbReference type="PaxDb" id="511145-b1115"/>
<dbReference type="EnsemblBacteria" id="AAC74199">
    <property type="protein sequence ID" value="AAC74199"/>
    <property type="gene ID" value="b1115"/>
</dbReference>
<dbReference type="GeneID" id="945679"/>
<dbReference type="KEGG" id="ecj:JW1101"/>
<dbReference type="KEGG" id="eco:b1115"/>
<dbReference type="KEGG" id="ecoc:C3026_06720"/>
<dbReference type="PATRIC" id="fig|1411691.4.peg.1152"/>
<dbReference type="EchoBASE" id="EB3212"/>
<dbReference type="eggNOG" id="COG4763">
    <property type="taxonomic scope" value="Bacteria"/>
</dbReference>
<dbReference type="HOGENOM" id="CLU_023915_5_0_6"/>
<dbReference type="InParanoid" id="P75955"/>
<dbReference type="OMA" id="KVVHFAY"/>
<dbReference type="OrthoDB" id="9767863at2"/>
<dbReference type="BioCyc" id="EcoCyc:G6572-MONOMER"/>
<dbReference type="PRO" id="PR:P75955"/>
<dbReference type="Proteomes" id="UP000000625">
    <property type="component" value="Chromosome"/>
</dbReference>
<dbReference type="GO" id="GO:0005886">
    <property type="term" value="C:plasma membrane"/>
    <property type="evidence" value="ECO:0000314"/>
    <property type="project" value="EcoCyc"/>
</dbReference>
<dbReference type="GO" id="GO:0016413">
    <property type="term" value="F:O-acetyltransferase activity"/>
    <property type="evidence" value="ECO:0000318"/>
    <property type="project" value="GO_Central"/>
</dbReference>
<dbReference type="GO" id="GO:0009246">
    <property type="term" value="P:enterobacterial common antigen biosynthetic process"/>
    <property type="evidence" value="ECO:0000318"/>
    <property type="project" value="GO_Central"/>
</dbReference>
<dbReference type="InterPro" id="IPR002656">
    <property type="entry name" value="Acyl_transf_3_dom"/>
</dbReference>
<dbReference type="PANTHER" id="PTHR40074:SF4">
    <property type="entry name" value="INNER MEMBRANE PROTEIN YCFT"/>
    <property type="match status" value="1"/>
</dbReference>
<dbReference type="PANTHER" id="PTHR40074">
    <property type="entry name" value="O-ACETYLTRANSFERASE WECH"/>
    <property type="match status" value="1"/>
</dbReference>
<dbReference type="Pfam" id="PF01757">
    <property type="entry name" value="Acyl_transf_3"/>
    <property type="match status" value="1"/>
</dbReference>
<feature type="chain" id="PRO_0000208097" description="Inner membrane protein YcfT">
    <location>
        <begin position="1"/>
        <end position="357"/>
    </location>
</feature>
<feature type="topological domain" description="Cytoplasmic" evidence="1">
    <location>
        <begin position="1"/>
        <end position="12"/>
    </location>
</feature>
<feature type="transmembrane region" description="Helical" evidence="1">
    <location>
        <begin position="13"/>
        <end position="33"/>
    </location>
</feature>
<feature type="topological domain" description="Periplasmic" evidence="1">
    <location>
        <begin position="34"/>
        <end position="49"/>
    </location>
</feature>
<feature type="transmembrane region" description="Helical" evidence="1">
    <location>
        <begin position="50"/>
        <end position="70"/>
    </location>
</feature>
<feature type="topological domain" description="Cytoplasmic" evidence="1">
    <location>
        <begin position="71"/>
        <end position="86"/>
    </location>
</feature>
<feature type="transmembrane region" description="Helical" evidence="1">
    <location>
        <begin position="87"/>
        <end position="107"/>
    </location>
</feature>
<feature type="topological domain" description="Periplasmic" evidence="1">
    <location>
        <begin position="108"/>
        <end position="135"/>
    </location>
</feature>
<feature type="transmembrane region" description="Helical" evidence="1">
    <location>
        <begin position="136"/>
        <end position="156"/>
    </location>
</feature>
<feature type="topological domain" description="Cytoplasmic" evidence="1">
    <location>
        <begin position="157"/>
        <end position="162"/>
    </location>
</feature>
<feature type="transmembrane region" description="Helical" evidence="1">
    <location>
        <begin position="163"/>
        <end position="183"/>
    </location>
</feature>
<feature type="topological domain" description="Periplasmic" evidence="1">
    <location>
        <begin position="184"/>
        <end position="196"/>
    </location>
</feature>
<feature type="transmembrane region" description="Helical" evidence="1">
    <location>
        <begin position="197"/>
        <end position="217"/>
    </location>
</feature>
<feature type="topological domain" description="Cytoplasmic" evidence="1">
    <location>
        <begin position="218"/>
        <end position="231"/>
    </location>
</feature>
<feature type="transmembrane region" description="Helical" evidence="1">
    <location>
        <begin position="232"/>
        <end position="252"/>
    </location>
</feature>
<feature type="topological domain" description="Periplasmic" evidence="1">
    <location>
        <begin position="253"/>
        <end position="310"/>
    </location>
</feature>
<feature type="transmembrane region" description="Helical" evidence="1">
    <location>
        <begin position="311"/>
        <end position="331"/>
    </location>
</feature>
<feature type="topological domain" description="Cytoplasmic" evidence="1">
    <location>
        <begin position="332"/>
        <end position="357"/>
    </location>
</feature>
<gene>
    <name type="primary">ycfT</name>
    <name type="ordered locus">b1115</name>
    <name type="ordered locus">JW1101</name>
</gene>
<proteinExistence type="evidence at protein level"/>
<reference key="1">
    <citation type="journal article" date="1996" name="DNA Res.">
        <title>A 718-kb DNA sequence of the Escherichia coli K-12 genome corresponding to the 12.7-28.0 min region on the linkage map.</title>
        <authorList>
            <person name="Oshima T."/>
            <person name="Aiba H."/>
            <person name="Baba T."/>
            <person name="Fujita K."/>
            <person name="Hayashi K."/>
            <person name="Honjo A."/>
            <person name="Ikemoto K."/>
            <person name="Inada T."/>
            <person name="Itoh T."/>
            <person name="Kajihara M."/>
            <person name="Kanai K."/>
            <person name="Kashimoto K."/>
            <person name="Kimura S."/>
            <person name="Kitagawa M."/>
            <person name="Makino K."/>
            <person name="Masuda S."/>
            <person name="Miki T."/>
            <person name="Mizobuchi K."/>
            <person name="Mori H."/>
            <person name="Motomura K."/>
            <person name="Nakamura Y."/>
            <person name="Nashimoto H."/>
            <person name="Nishio Y."/>
            <person name="Saito N."/>
            <person name="Sampei G."/>
            <person name="Seki Y."/>
            <person name="Tagami H."/>
            <person name="Takemoto K."/>
            <person name="Wada C."/>
            <person name="Yamamoto Y."/>
            <person name="Yano M."/>
            <person name="Horiuchi T."/>
        </authorList>
    </citation>
    <scope>NUCLEOTIDE SEQUENCE [LARGE SCALE GENOMIC DNA]</scope>
    <source>
        <strain>K12 / W3110 / ATCC 27325 / DSM 5911</strain>
    </source>
</reference>
<reference key="2">
    <citation type="journal article" date="1997" name="Science">
        <title>The complete genome sequence of Escherichia coli K-12.</title>
        <authorList>
            <person name="Blattner F.R."/>
            <person name="Plunkett G. III"/>
            <person name="Bloch C.A."/>
            <person name="Perna N.T."/>
            <person name="Burland V."/>
            <person name="Riley M."/>
            <person name="Collado-Vides J."/>
            <person name="Glasner J.D."/>
            <person name="Rode C.K."/>
            <person name="Mayhew G.F."/>
            <person name="Gregor J."/>
            <person name="Davis N.W."/>
            <person name="Kirkpatrick H.A."/>
            <person name="Goeden M.A."/>
            <person name="Rose D.J."/>
            <person name="Mau B."/>
            <person name="Shao Y."/>
        </authorList>
    </citation>
    <scope>NUCLEOTIDE SEQUENCE [LARGE SCALE GENOMIC DNA]</scope>
    <source>
        <strain>K12 / MG1655 / ATCC 47076</strain>
    </source>
</reference>
<reference key="3">
    <citation type="journal article" date="2006" name="Mol. Syst. Biol.">
        <title>Highly accurate genome sequences of Escherichia coli K-12 strains MG1655 and W3110.</title>
        <authorList>
            <person name="Hayashi K."/>
            <person name="Morooka N."/>
            <person name="Yamamoto Y."/>
            <person name="Fujita K."/>
            <person name="Isono K."/>
            <person name="Choi S."/>
            <person name="Ohtsubo E."/>
            <person name="Baba T."/>
            <person name="Wanner B.L."/>
            <person name="Mori H."/>
            <person name="Horiuchi T."/>
        </authorList>
    </citation>
    <scope>NUCLEOTIDE SEQUENCE [LARGE SCALE GENOMIC DNA]</scope>
    <source>
        <strain>K12 / W3110 / ATCC 27325 / DSM 5911</strain>
    </source>
</reference>
<reference key="4">
    <citation type="journal article" date="2005" name="Science">
        <title>Global topology analysis of the Escherichia coli inner membrane proteome.</title>
        <authorList>
            <person name="Daley D.O."/>
            <person name="Rapp M."/>
            <person name="Granseth E."/>
            <person name="Melen K."/>
            <person name="Drew D."/>
            <person name="von Heijne G."/>
        </authorList>
    </citation>
    <scope>TOPOLOGY [LARGE SCALE ANALYSIS]</scope>
    <source>
        <strain>K12 / MG1655 / ATCC 47076</strain>
    </source>
</reference>
<name>YCFT_ECOLI</name>
<comment type="subcellular location">
    <subcellularLocation>
        <location>Cell inner membrane</location>
        <topology>Multi-pass membrane protein</topology>
    </subcellularLocation>
</comment>
<comment type="similarity">
    <text evidence="2">Belongs to the acyltransferase 3 family.</text>
</comment>
<organism>
    <name type="scientific">Escherichia coli (strain K12)</name>
    <dbReference type="NCBI Taxonomy" id="83333"/>
    <lineage>
        <taxon>Bacteria</taxon>
        <taxon>Pseudomonadati</taxon>
        <taxon>Pseudomonadota</taxon>
        <taxon>Gammaproteobacteria</taxon>
        <taxon>Enterobacterales</taxon>
        <taxon>Enterobacteriaceae</taxon>
        <taxon>Escherichia</taxon>
    </lineage>
</organism>
<accession>P75955</accession>
<keyword id="KW-0997">Cell inner membrane</keyword>
<keyword id="KW-1003">Cell membrane</keyword>
<keyword id="KW-0472">Membrane</keyword>
<keyword id="KW-1185">Reference proteome</keyword>
<keyword id="KW-0812">Transmembrane</keyword>
<keyword id="KW-1133">Transmembrane helix</keyword>
<protein>
    <recommendedName>
        <fullName>Inner membrane protein YcfT</fullName>
    </recommendedName>
</protein>
<sequence>MKQKELWINQIKGLCICLVVIYHSVITFYPHLTTFQHPLSEVLSKCWIYFNLYLAPFRMPVFFFISGYLIRRYIDSVPWGNCLDKRIWNIFWVLALWGVVQWLALSALNQWLAPERDLSNASNAAYADSTGEFLHGMITASTSLWYLYALIVYFVVCKIFSRLALPLFALFVLLSVAVNFVPTPWWGMNSVIRNLPYYSLGAWFGATIMTCVKEVPLRRHLLMASLLTVLAVGAWLFTISLLLSLVSIVVIMKLFYQYEQRFGMRSTSLLNVIGSNTIAIYTTHRILVEIFSLTLLAQMNAARWSPQVELTLLLVYPFVSLFICTVAGLLVRKLSQRAFSDLLFSPPSLPAAVSYSR</sequence>